<evidence type="ECO:0000255" key="1">
    <source>
        <dbReference type="HAMAP-Rule" id="MF_00294"/>
    </source>
</evidence>
<evidence type="ECO:0000305" key="2"/>
<protein>
    <recommendedName>
        <fullName evidence="1">Large ribosomal subunit protein bL33</fullName>
    </recommendedName>
    <alternativeName>
        <fullName evidence="2">50S ribosomal protein L33</fullName>
    </alternativeName>
</protein>
<organism>
    <name type="scientific">Delftia acidovorans (strain DSM 14801 / SPH-1)</name>
    <dbReference type="NCBI Taxonomy" id="398578"/>
    <lineage>
        <taxon>Bacteria</taxon>
        <taxon>Pseudomonadati</taxon>
        <taxon>Pseudomonadota</taxon>
        <taxon>Betaproteobacteria</taxon>
        <taxon>Burkholderiales</taxon>
        <taxon>Comamonadaceae</taxon>
        <taxon>Delftia</taxon>
    </lineage>
</organism>
<name>RL33_DELAS</name>
<comment type="similarity">
    <text evidence="1">Belongs to the bacterial ribosomal protein bL33 family.</text>
</comment>
<dbReference type="EMBL" id="CP000884">
    <property type="protein sequence ID" value="ABX37995.1"/>
    <property type="molecule type" value="Genomic_DNA"/>
</dbReference>
<dbReference type="RefSeq" id="WP_012207164.1">
    <property type="nucleotide sequence ID" value="NC_010002.1"/>
</dbReference>
<dbReference type="SMR" id="A9BNV0"/>
<dbReference type="STRING" id="398578.Daci_5366"/>
<dbReference type="GeneID" id="94690632"/>
<dbReference type="KEGG" id="dac:Daci_5366"/>
<dbReference type="eggNOG" id="COG0267">
    <property type="taxonomic scope" value="Bacteria"/>
</dbReference>
<dbReference type="HOGENOM" id="CLU_190949_1_1_4"/>
<dbReference type="Proteomes" id="UP000000784">
    <property type="component" value="Chromosome"/>
</dbReference>
<dbReference type="GO" id="GO:0022625">
    <property type="term" value="C:cytosolic large ribosomal subunit"/>
    <property type="evidence" value="ECO:0007669"/>
    <property type="project" value="TreeGrafter"/>
</dbReference>
<dbReference type="GO" id="GO:0003735">
    <property type="term" value="F:structural constituent of ribosome"/>
    <property type="evidence" value="ECO:0007669"/>
    <property type="project" value="InterPro"/>
</dbReference>
<dbReference type="GO" id="GO:0006412">
    <property type="term" value="P:translation"/>
    <property type="evidence" value="ECO:0007669"/>
    <property type="project" value="UniProtKB-UniRule"/>
</dbReference>
<dbReference type="Gene3D" id="2.20.28.120">
    <property type="entry name" value="Ribosomal protein L33"/>
    <property type="match status" value="1"/>
</dbReference>
<dbReference type="HAMAP" id="MF_00294">
    <property type="entry name" value="Ribosomal_bL33"/>
    <property type="match status" value="1"/>
</dbReference>
<dbReference type="InterPro" id="IPR001705">
    <property type="entry name" value="Ribosomal_bL33"/>
</dbReference>
<dbReference type="InterPro" id="IPR018264">
    <property type="entry name" value="Ribosomal_bL33_CS"/>
</dbReference>
<dbReference type="InterPro" id="IPR038584">
    <property type="entry name" value="Ribosomal_bL33_sf"/>
</dbReference>
<dbReference type="InterPro" id="IPR011332">
    <property type="entry name" value="Ribosomal_zn-bd"/>
</dbReference>
<dbReference type="NCBIfam" id="NF001860">
    <property type="entry name" value="PRK00595.1"/>
    <property type="match status" value="1"/>
</dbReference>
<dbReference type="NCBIfam" id="TIGR01023">
    <property type="entry name" value="rpmG_bact"/>
    <property type="match status" value="1"/>
</dbReference>
<dbReference type="PANTHER" id="PTHR15238">
    <property type="entry name" value="54S RIBOSOMAL PROTEIN L39, MITOCHONDRIAL"/>
    <property type="match status" value="1"/>
</dbReference>
<dbReference type="PANTHER" id="PTHR15238:SF1">
    <property type="entry name" value="LARGE RIBOSOMAL SUBUNIT PROTEIN BL33M"/>
    <property type="match status" value="1"/>
</dbReference>
<dbReference type="Pfam" id="PF00471">
    <property type="entry name" value="Ribosomal_L33"/>
    <property type="match status" value="1"/>
</dbReference>
<dbReference type="SUPFAM" id="SSF57829">
    <property type="entry name" value="Zn-binding ribosomal proteins"/>
    <property type="match status" value="1"/>
</dbReference>
<dbReference type="PROSITE" id="PS00582">
    <property type="entry name" value="RIBOSOMAL_L33"/>
    <property type="match status" value="1"/>
</dbReference>
<feature type="chain" id="PRO_1000115128" description="Large ribosomal subunit protein bL33">
    <location>
        <begin position="1"/>
        <end position="56"/>
    </location>
</feature>
<keyword id="KW-1185">Reference proteome</keyword>
<keyword id="KW-0687">Ribonucleoprotein</keyword>
<keyword id="KW-0689">Ribosomal protein</keyword>
<gene>
    <name evidence="1" type="primary">rpmG</name>
    <name type="ordered locus">Daci_5366</name>
</gene>
<proteinExistence type="inferred from homology"/>
<sequence length="56" mass="6400">MAAKGGREKIKLESTAGTGHFYTTTKNKKTMPEKMAIMKFDPKARKHVTYKEIKLK</sequence>
<accession>A9BNV0</accession>
<reference key="1">
    <citation type="submission" date="2007-11" db="EMBL/GenBank/DDBJ databases">
        <title>Complete sequence of Delftia acidovorans DSM 14801 / SPH-1.</title>
        <authorList>
            <person name="Copeland A."/>
            <person name="Lucas S."/>
            <person name="Lapidus A."/>
            <person name="Barry K."/>
            <person name="Glavina del Rio T."/>
            <person name="Dalin E."/>
            <person name="Tice H."/>
            <person name="Pitluck S."/>
            <person name="Lowry S."/>
            <person name="Clum A."/>
            <person name="Schmutz J."/>
            <person name="Larimer F."/>
            <person name="Land M."/>
            <person name="Hauser L."/>
            <person name="Kyrpides N."/>
            <person name="Kim E."/>
            <person name="Schleheck D."/>
            <person name="Richardson P."/>
        </authorList>
    </citation>
    <scope>NUCLEOTIDE SEQUENCE [LARGE SCALE GENOMIC DNA]</scope>
    <source>
        <strain>DSM 14801 / SPH-1</strain>
    </source>
</reference>